<gene>
    <name type="primary">ampC</name>
    <name type="ordered locus">PA4110</name>
</gene>
<feature type="signal peptide" evidence="7">
    <location>
        <begin position="1"/>
        <end position="26"/>
    </location>
</feature>
<feature type="chain" id="PRO_0000016963" description="Beta-lactamase">
    <location>
        <begin position="27"/>
        <end position="397"/>
    </location>
</feature>
<feature type="active site" description="Acyl-ester intermediate" evidence="4">
    <location>
        <position position="90"/>
    </location>
</feature>
<feature type="active site" description="Proton acceptor" evidence="1">
    <location>
        <position position="177"/>
    </location>
</feature>
<feature type="binding site" evidence="2">
    <location>
        <position position="90"/>
    </location>
    <ligand>
        <name>a beta-lactam</name>
        <dbReference type="ChEBI" id="CHEBI:35627"/>
    </ligand>
</feature>
<feature type="binding site" evidence="2">
    <location>
        <position position="146"/>
    </location>
    <ligand>
        <name>a beta-lactam</name>
        <dbReference type="ChEBI" id="CHEBI:35627"/>
    </ligand>
</feature>
<feature type="binding site" evidence="2">
    <location>
        <position position="177"/>
    </location>
    <ligand>
        <name>a beta-lactam</name>
        <dbReference type="ChEBI" id="CHEBI:35627"/>
    </ligand>
</feature>
<feature type="binding site" evidence="2">
    <location>
        <position position="179"/>
    </location>
    <ligand>
        <name>a beta-lactam</name>
        <dbReference type="ChEBI" id="CHEBI:35627"/>
    </ligand>
</feature>
<feature type="binding site" evidence="2">
    <location>
        <position position="370"/>
    </location>
    <ligand>
        <name>a beta-lactam</name>
        <dbReference type="ChEBI" id="CHEBI:35627"/>
    </ligand>
</feature>
<feature type="sequence conflict" description="In Ref. 1; CAA38522." evidence="8" ref="1">
    <original>R</original>
    <variation>A</variation>
    <location>
        <position position="397"/>
    </location>
</feature>
<feature type="helix" evidence="10">
    <location>
        <begin position="30"/>
        <end position="48"/>
    </location>
</feature>
<feature type="strand" evidence="10">
    <location>
        <begin position="52"/>
        <end position="60"/>
    </location>
</feature>
<feature type="strand" evidence="10">
    <location>
        <begin position="63"/>
        <end position="73"/>
    </location>
</feature>
<feature type="turn" evidence="10">
    <location>
        <begin position="74"/>
        <end position="77"/>
    </location>
</feature>
<feature type="strand" evidence="10">
    <location>
        <begin position="85"/>
        <end position="87"/>
    </location>
</feature>
<feature type="helix" evidence="10">
    <location>
        <begin position="89"/>
        <end position="91"/>
    </location>
</feature>
<feature type="helix" evidence="10">
    <location>
        <begin position="92"/>
        <end position="105"/>
    </location>
</feature>
<feature type="helix" evidence="10">
    <location>
        <begin position="115"/>
        <end position="118"/>
    </location>
</feature>
<feature type="helix" evidence="10">
    <location>
        <begin position="120"/>
        <end position="122"/>
    </location>
</feature>
<feature type="helix" evidence="10">
    <location>
        <begin position="126"/>
        <end position="129"/>
    </location>
</feature>
<feature type="helix" evidence="10">
    <location>
        <begin position="132"/>
        <end position="136"/>
    </location>
</feature>
<feature type="helix" evidence="10">
    <location>
        <begin position="155"/>
        <end position="164"/>
    </location>
</feature>
<feature type="strand" evidence="10">
    <location>
        <begin position="173"/>
        <end position="175"/>
    </location>
</feature>
<feature type="helix" evidence="10">
    <location>
        <begin position="179"/>
        <end position="192"/>
    </location>
</feature>
<feature type="helix" evidence="10">
    <location>
        <begin position="197"/>
        <end position="203"/>
    </location>
</feature>
<feature type="helix" evidence="10">
    <location>
        <begin position="205"/>
        <end position="208"/>
    </location>
</feature>
<feature type="strand" evidence="10">
    <location>
        <begin position="212"/>
        <end position="217"/>
    </location>
</feature>
<feature type="helix" evidence="10">
    <location>
        <begin position="220"/>
        <end position="225"/>
    </location>
</feature>
<feature type="helix" evidence="10">
    <location>
        <begin position="232"/>
        <end position="234"/>
    </location>
</feature>
<feature type="helix" evidence="10">
    <location>
        <begin position="245"/>
        <end position="249"/>
    </location>
</feature>
<feature type="strand" evidence="10">
    <location>
        <begin position="252"/>
        <end position="254"/>
    </location>
</feature>
<feature type="helix" evidence="10">
    <location>
        <begin position="255"/>
        <end position="266"/>
    </location>
</feature>
<feature type="helix" evidence="10">
    <location>
        <begin position="268"/>
        <end position="270"/>
    </location>
</feature>
<feature type="helix" evidence="10">
    <location>
        <begin position="273"/>
        <end position="280"/>
    </location>
</feature>
<feature type="strand" evidence="10">
    <location>
        <begin position="283"/>
        <end position="289"/>
    </location>
</feature>
<feature type="strand" evidence="10">
    <location>
        <begin position="292"/>
        <end position="294"/>
    </location>
</feature>
<feature type="strand" evidence="10">
    <location>
        <begin position="299"/>
        <end position="304"/>
    </location>
</feature>
<feature type="helix" evidence="10">
    <location>
        <begin position="307"/>
        <end position="313"/>
    </location>
</feature>
<feature type="helix" evidence="10">
    <location>
        <begin position="316"/>
        <end position="320"/>
    </location>
</feature>
<feature type="strand" evidence="10">
    <location>
        <begin position="326"/>
        <end position="333"/>
    </location>
</feature>
<feature type="strand" evidence="10">
    <location>
        <begin position="336"/>
        <end position="346"/>
    </location>
</feature>
<feature type="strand" evidence="10">
    <location>
        <begin position="349"/>
        <end position="356"/>
    </location>
</feature>
<feature type="helix" evidence="10">
    <location>
        <begin position="357"/>
        <end position="359"/>
    </location>
</feature>
<feature type="strand" evidence="10">
    <location>
        <begin position="361"/>
        <end position="369"/>
    </location>
</feature>
<feature type="helix" evidence="10">
    <location>
        <begin position="373"/>
        <end position="387"/>
    </location>
</feature>
<comment type="function">
    <text evidence="2 5">Class C beta-lactamase which confers resistance to penicillins and cephalosporins (By similarity). Has nitrocefin-hydrolyzing activity (PubMed:16251297).</text>
</comment>
<comment type="catalytic activity">
    <reaction evidence="4 5">
        <text>a beta-lactam + H2O = a substituted beta-amino acid</text>
        <dbReference type="Rhea" id="RHEA:20401"/>
        <dbReference type="ChEBI" id="CHEBI:15377"/>
        <dbReference type="ChEBI" id="CHEBI:35627"/>
        <dbReference type="ChEBI" id="CHEBI:140347"/>
        <dbReference type="EC" id="3.5.2.6"/>
    </reaction>
</comment>
<comment type="subunit">
    <text evidence="2">Monomer.</text>
</comment>
<comment type="subcellular location">
    <subcellularLocation>
        <location evidence="3">Periplasm</location>
    </subcellularLocation>
</comment>
<comment type="induction">
    <text evidence="5 6">Up-regulated by beta-lactam antibiotics, such as ampicillin or benzylpenicillin (PubMed:16251297, PubMed:25182487). Expression is negatively regulated by sigma factor RpoN, possibly through promoter blocking (PubMed:25182487).</text>
</comment>
<comment type="miscellaneous">
    <text evidence="9">The class C beta-lactamase family has a specific amino-acid numbering system known as SANC, for structural alignment-based numbering of class C beta-lactamases, or else the simpler name structural position. A multiple sequence alignment was used to derive a consensus sequence and then the consensus was numbered taking into account insertions and deletions. This allows use of identical numbers, e.g. for active site residues, despite differences in protein length. UniProt always uses natural numbering of residues, hence there appear to be differences in numbering between this entry and some papers.</text>
</comment>
<comment type="similarity">
    <text evidence="8">Belongs to the class-C beta-lactamase family.</text>
</comment>
<proteinExistence type="evidence at protein level"/>
<sequence>MRDTRFPCLCGIAASTLLFATTPAIAGEAPADRLKALVDAAVQPVMKANDIPGLAVAISLKGEPHYFSYGLASKEDGRRVTPETLFEIGSVSKTFTATLAGYALTQDKMRLDDRASQHWPALQGSRFDGISLLDLATYTAGGLPLQFPDSVQKDQAQIRDYYRQWQPTYAPGSQRLYSNPSIGLFGYLAARSLGQPFERLMEQQVFPALGLEQTHLDVPEAALAQYAQGYGKDDRPLRVGPGPLDAEGYGVKTSAADLLRFVDANLHPERLDRPWAQALDATHRGYYKVGDMTQGLGWEAYDWPISLKRLQAGNSTPMALQPHRIARLPAPQALEGQRLLNKTGSTNGFGAYVAFVPGRDLGLVILANRNYPNAERVKIAYAILSGLEQQGKVPLKR</sequence>
<accession>P24735</accession>
<protein>
    <recommendedName>
        <fullName>Beta-lactamase</fullName>
        <ecNumber evidence="5">3.5.2.6</ecNumber>
    </recommendedName>
    <alternativeName>
        <fullName>Cephalosporinase</fullName>
    </alternativeName>
</protein>
<organism>
    <name type="scientific">Pseudomonas aeruginosa (strain ATCC 15692 / DSM 22644 / CIP 104116 / JCM 14847 / LMG 12228 / 1C / PRS 101 / PAO1)</name>
    <dbReference type="NCBI Taxonomy" id="208964"/>
    <lineage>
        <taxon>Bacteria</taxon>
        <taxon>Pseudomonadati</taxon>
        <taxon>Pseudomonadota</taxon>
        <taxon>Gammaproteobacteria</taxon>
        <taxon>Pseudomonadales</taxon>
        <taxon>Pseudomonadaceae</taxon>
        <taxon>Pseudomonas</taxon>
    </lineage>
</organism>
<name>AMPC_PSEAE</name>
<keyword id="KW-0002">3D-structure</keyword>
<keyword id="KW-0046">Antibiotic resistance</keyword>
<keyword id="KW-0903">Direct protein sequencing</keyword>
<keyword id="KW-0378">Hydrolase</keyword>
<keyword id="KW-0574">Periplasm</keyword>
<keyword id="KW-1185">Reference proteome</keyword>
<keyword id="KW-0732">Signal</keyword>
<dbReference type="EC" id="3.5.2.6" evidence="5"/>
<dbReference type="EMBL" id="X54719">
    <property type="protein sequence ID" value="CAA38522.1"/>
    <property type="molecule type" value="Genomic_DNA"/>
</dbReference>
<dbReference type="EMBL" id="AE004091">
    <property type="protein sequence ID" value="AAG07497.1"/>
    <property type="molecule type" value="Genomic_DNA"/>
</dbReference>
<dbReference type="EMBL" id="X67095">
    <property type="protein sequence ID" value="CAA47469.1"/>
    <property type="molecule type" value="Genomic_DNA"/>
</dbReference>
<dbReference type="PIR" id="F83132">
    <property type="entry name" value="F83132"/>
</dbReference>
<dbReference type="PIR" id="S13408">
    <property type="entry name" value="S13408"/>
</dbReference>
<dbReference type="RefSeq" id="NP_252799.1">
    <property type="nucleotide sequence ID" value="NC_002516.2"/>
</dbReference>
<dbReference type="PDB" id="2WZX">
    <property type="method" value="X-ray"/>
    <property type="resolution" value="1.40 A"/>
    <property type="chains" value="A=27-397"/>
</dbReference>
<dbReference type="PDB" id="2WZZ">
    <property type="method" value="X-ray"/>
    <property type="resolution" value="1.57 A"/>
    <property type="chains" value="A=27-397"/>
</dbReference>
<dbReference type="PDB" id="3S1Y">
    <property type="method" value="X-ray"/>
    <property type="resolution" value="1.40 A"/>
    <property type="chains" value="A=27-397"/>
</dbReference>
<dbReference type="PDB" id="3S22">
    <property type="method" value="X-ray"/>
    <property type="resolution" value="1.65 A"/>
    <property type="chains" value="A=27-397"/>
</dbReference>
<dbReference type="PDB" id="4GZB">
    <property type="method" value="X-ray"/>
    <property type="resolution" value="1.79 A"/>
    <property type="chains" value="A=27-397"/>
</dbReference>
<dbReference type="PDB" id="4HEF">
    <property type="method" value="X-ray"/>
    <property type="resolution" value="1.86 A"/>
    <property type="chains" value="A=29-388"/>
</dbReference>
<dbReference type="PDB" id="4NK3">
    <property type="method" value="X-ray"/>
    <property type="resolution" value="1.90 A"/>
    <property type="chains" value="A=27-397"/>
</dbReference>
<dbReference type="PDB" id="4OOY">
    <property type="method" value="X-ray"/>
    <property type="resolution" value="1.10 A"/>
    <property type="chains" value="A=29-387"/>
</dbReference>
<dbReference type="PDB" id="4WYY">
    <property type="method" value="X-ray"/>
    <property type="resolution" value="1.28 A"/>
    <property type="chains" value="A=29-388"/>
</dbReference>
<dbReference type="PDB" id="4WZ4">
    <property type="method" value="X-ray"/>
    <property type="resolution" value="1.05 A"/>
    <property type="chains" value="A=29-388"/>
</dbReference>
<dbReference type="PDB" id="4X68">
    <property type="method" value="X-ray"/>
    <property type="resolution" value="1.68 A"/>
    <property type="chains" value="A/B=32-387"/>
</dbReference>
<dbReference type="PDB" id="6UQS">
    <property type="method" value="X-ray"/>
    <property type="resolution" value="1.37 A"/>
    <property type="chains" value="A=27-397"/>
</dbReference>
<dbReference type="PDB" id="6UQT">
    <property type="method" value="X-ray"/>
    <property type="resolution" value="1.25 A"/>
    <property type="chains" value="A=27-397"/>
</dbReference>
<dbReference type="PDB" id="6UQU">
    <property type="method" value="X-ray"/>
    <property type="resolution" value="1.09 A"/>
    <property type="chains" value="A=27-397"/>
</dbReference>
<dbReference type="PDB" id="6UR3">
    <property type="method" value="X-ray"/>
    <property type="resolution" value="1.42 A"/>
    <property type="chains" value="A=27-397"/>
</dbReference>
<dbReference type="PDB" id="8SDL">
    <property type="method" value="X-ray"/>
    <property type="resolution" value="1.75 A"/>
    <property type="chains" value="A=1-397"/>
</dbReference>
<dbReference type="PDB" id="8SDN">
    <property type="method" value="X-ray"/>
    <property type="resolution" value="2.10 A"/>
    <property type="chains" value="A=1-397"/>
</dbReference>
<dbReference type="PDB" id="8SDR">
    <property type="method" value="X-ray"/>
    <property type="resolution" value="1.35 A"/>
    <property type="chains" value="A=1-397"/>
</dbReference>
<dbReference type="PDB" id="8SDS">
    <property type="method" value="X-ray"/>
    <property type="resolution" value="1.63 A"/>
    <property type="chains" value="A=1-397"/>
</dbReference>
<dbReference type="PDB" id="8SDT">
    <property type="method" value="X-ray"/>
    <property type="resolution" value="1.38 A"/>
    <property type="chains" value="A=1-397"/>
</dbReference>
<dbReference type="PDB" id="8SDV">
    <property type="method" value="X-ray"/>
    <property type="resolution" value="1.42 A"/>
    <property type="chains" value="A=1-397"/>
</dbReference>
<dbReference type="PDBsum" id="2WZX"/>
<dbReference type="PDBsum" id="2WZZ"/>
<dbReference type="PDBsum" id="3S1Y"/>
<dbReference type="PDBsum" id="3S22"/>
<dbReference type="PDBsum" id="4GZB"/>
<dbReference type="PDBsum" id="4HEF"/>
<dbReference type="PDBsum" id="4NK3"/>
<dbReference type="PDBsum" id="4OOY"/>
<dbReference type="PDBsum" id="4WYY"/>
<dbReference type="PDBsum" id="4WZ4"/>
<dbReference type="PDBsum" id="4X68"/>
<dbReference type="PDBsum" id="6UQS"/>
<dbReference type="PDBsum" id="6UQT"/>
<dbReference type="PDBsum" id="6UQU"/>
<dbReference type="PDBsum" id="6UR3"/>
<dbReference type="PDBsum" id="8SDL"/>
<dbReference type="PDBsum" id="8SDN"/>
<dbReference type="PDBsum" id="8SDR"/>
<dbReference type="PDBsum" id="8SDS"/>
<dbReference type="PDBsum" id="8SDT"/>
<dbReference type="PDBsum" id="8SDV"/>
<dbReference type="SMR" id="P24735"/>
<dbReference type="FunCoup" id="P24735">
    <property type="interactions" value="170"/>
</dbReference>
<dbReference type="STRING" id="208964.PA4110"/>
<dbReference type="BindingDB" id="P24735"/>
<dbReference type="ChEMBL" id="CHEMBL5031"/>
<dbReference type="DrugCentral" id="P24735"/>
<dbReference type="CARD" id="ARO:3002497">
    <property type="molecule name" value="PDC-1"/>
    <property type="mechanism identifier" value="ARO:0001004"/>
    <property type="mechanism name" value="antibiotic inactivation"/>
</dbReference>
<dbReference type="PaxDb" id="208964-PA4110"/>
<dbReference type="GeneID" id="878149"/>
<dbReference type="KEGG" id="pae:PA4110"/>
<dbReference type="PseudoCAP" id="PA4110"/>
<dbReference type="HOGENOM" id="CLU_020027_10_0_6"/>
<dbReference type="InParanoid" id="P24735"/>
<dbReference type="OrthoDB" id="5377431at2"/>
<dbReference type="PhylomeDB" id="P24735"/>
<dbReference type="SABIO-RK" id="P24735"/>
<dbReference type="EvolutionaryTrace" id="P24735"/>
<dbReference type="Proteomes" id="UP000002438">
    <property type="component" value="Chromosome"/>
</dbReference>
<dbReference type="GO" id="GO:0030288">
    <property type="term" value="C:outer membrane-bounded periplasmic space"/>
    <property type="evidence" value="ECO:0007669"/>
    <property type="project" value="InterPro"/>
</dbReference>
<dbReference type="GO" id="GO:0008800">
    <property type="term" value="F:beta-lactamase activity"/>
    <property type="evidence" value="ECO:0007669"/>
    <property type="project" value="UniProtKB-EC"/>
</dbReference>
<dbReference type="GO" id="GO:0017001">
    <property type="term" value="P:antibiotic catabolic process"/>
    <property type="evidence" value="ECO:0007669"/>
    <property type="project" value="InterPro"/>
</dbReference>
<dbReference type="GO" id="GO:0046677">
    <property type="term" value="P:response to antibiotic"/>
    <property type="evidence" value="ECO:0007669"/>
    <property type="project" value="UniProtKB-KW"/>
</dbReference>
<dbReference type="FunFam" id="3.40.710.10:FF:000012">
    <property type="entry name" value="Beta-lactamase"/>
    <property type="match status" value="1"/>
</dbReference>
<dbReference type="Gene3D" id="3.40.710.10">
    <property type="entry name" value="DD-peptidase/beta-lactamase superfamily"/>
    <property type="match status" value="1"/>
</dbReference>
<dbReference type="InterPro" id="IPR050491">
    <property type="entry name" value="Bact_CellWall_Synth/Modif"/>
</dbReference>
<dbReference type="InterPro" id="IPR001466">
    <property type="entry name" value="Beta-lactam-related"/>
</dbReference>
<dbReference type="InterPro" id="IPR012338">
    <property type="entry name" value="Beta-lactam/transpept-like"/>
</dbReference>
<dbReference type="InterPro" id="IPR001586">
    <property type="entry name" value="Beta-lactam_class-C_AS"/>
</dbReference>
<dbReference type="NCBIfam" id="NF033085">
    <property type="entry name" value="bla_class_C"/>
    <property type="match status" value="1"/>
</dbReference>
<dbReference type="NCBIfam" id="NF000422">
    <property type="entry name" value="blaPDC"/>
    <property type="match status" value="1"/>
</dbReference>
<dbReference type="PANTHER" id="PTHR46825:SF8">
    <property type="entry name" value="BETA-LACTAMASE-RELATED"/>
    <property type="match status" value="1"/>
</dbReference>
<dbReference type="PANTHER" id="PTHR46825">
    <property type="entry name" value="D-ALANYL-D-ALANINE-CARBOXYPEPTIDASE/ENDOPEPTIDASE AMPH"/>
    <property type="match status" value="1"/>
</dbReference>
<dbReference type="Pfam" id="PF00144">
    <property type="entry name" value="Beta-lactamase"/>
    <property type="match status" value="1"/>
</dbReference>
<dbReference type="SUPFAM" id="SSF56601">
    <property type="entry name" value="beta-lactamase/transpeptidase-like"/>
    <property type="match status" value="1"/>
</dbReference>
<dbReference type="PROSITE" id="PS00336">
    <property type="entry name" value="BETA_LACTAMASE_C"/>
    <property type="match status" value="1"/>
</dbReference>
<evidence type="ECO:0000250" key="1"/>
<evidence type="ECO:0000250" key="2">
    <source>
        <dbReference type="UniProtKB" id="P00811"/>
    </source>
</evidence>
<evidence type="ECO:0000250" key="3">
    <source>
        <dbReference type="UniProtKB" id="P85302"/>
    </source>
</evidence>
<evidence type="ECO:0000255" key="4">
    <source>
        <dbReference type="PROSITE-ProRule" id="PRU10102"/>
    </source>
</evidence>
<evidence type="ECO:0000269" key="5">
    <source>
    </source>
</evidence>
<evidence type="ECO:0000269" key="6">
    <source>
    </source>
</evidence>
<evidence type="ECO:0000269" key="7">
    <source>
    </source>
</evidence>
<evidence type="ECO:0000305" key="8"/>
<evidence type="ECO:0000305" key="9">
    <source>
    </source>
</evidence>
<evidence type="ECO:0007829" key="10">
    <source>
        <dbReference type="PDB" id="4WZ4"/>
    </source>
</evidence>
<reference key="1">
    <citation type="journal article" date="1990" name="Biochem. J.">
        <title>Cloning, sequencing and analysis of the structural gene and regulatory region of the Pseudomonas aeruginosa chromosomal ampC beta-lactamase.</title>
        <authorList>
            <person name="Lodge J.M."/>
            <person name="Minchin S.D."/>
            <person name="Piddock L.J.V."/>
            <person name="Busby S.J.W."/>
        </authorList>
    </citation>
    <scope>NUCLEOTIDE SEQUENCE [GENOMIC DNA]</scope>
    <source>
        <strain>ATCC 15692 / DSM 22644 / CIP 104116 / JCM 14847 / LMG 12228 / 1C / PRS 101 / PAO1</strain>
    </source>
</reference>
<reference key="2">
    <citation type="journal article" date="2000" name="Nature">
        <title>Complete genome sequence of Pseudomonas aeruginosa PAO1, an opportunistic pathogen.</title>
        <authorList>
            <person name="Stover C.K."/>
            <person name="Pham X.-Q.T."/>
            <person name="Erwin A.L."/>
            <person name="Mizoguchi S.D."/>
            <person name="Warrener P."/>
            <person name="Hickey M.J."/>
            <person name="Brinkman F.S.L."/>
            <person name="Hufnagle W.O."/>
            <person name="Kowalik D.J."/>
            <person name="Lagrou M."/>
            <person name="Garber R.L."/>
            <person name="Goltry L."/>
            <person name="Tolentino E."/>
            <person name="Westbrock-Wadman S."/>
            <person name="Yuan Y."/>
            <person name="Brody L.L."/>
            <person name="Coulter S.N."/>
            <person name="Folger K.R."/>
            <person name="Kas A."/>
            <person name="Larbig K."/>
            <person name="Lim R.M."/>
            <person name="Smith K.A."/>
            <person name="Spencer D.H."/>
            <person name="Wong G.K.-S."/>
            <person name="Wu Z."/>
            <person name="Paulsen I.T."/>
            <person name="Reizer J."/>
            <person name="Saier M.H. Jr."/>
            <person name="Hancock R.E.W."/>
            <person name="Lory S."/>
            <person name="Olson M.V."/>
        </authorList>
    </citation>
    <scope>NUCLEOTIDE SEQUENCE [LARGE SCALE GENOMIC DNA]</scope>
    <source>
        <strain>ATCC 15692 / DSM 22644 / CIP 104116 / JCM 14847 / LMG 12228 / 1C / PRS 101 / PAO1</strain>
    </source>
</reference>
<reference key="3">
    <citation type="journal article" date="1993" name="Enzyme Protein">
        <title>Two-dimensional polyacrylamide gel electrophoresis isolation and microsequencing of Pseudomonas aeruginosa proteins.</title>
        <authorList>
            <person name="Michea-Hamzehpour M."/>
            <person name="Sanchez J.-C."/>
            <person name="Epp S.F."/>
            <person name="Paquet N."/>
            <person name="Hughes G.J."/>
            <person name="Hochstrasser D.F."/>
            <person name="Pechere J.-C."/>
        </authorList>
    </citation>
    <scope>PROTEIN SEQUENCE OF 27-41</scope>
</reference>
<reference key="4">
    <citation type="journal article" date="1993" name="FEMS Microbiol. Lett.">
        <title>Investigation of the Pseudomonas aeruginosa ampR gene and its role at the chromosomal ampC beta-lactamase promoter.</title>
        <authorList>
            <person name="Lodge J.M."/>
            <person name="Busby S.J.W."/>
            <person name="Piddock L.J.V."/>
        </authorList>
    </citation>
    <scope>NUCLEOTIDE SEQUENCE [GENOMIC DNA] OF 1-3</scope>
    <source>
        <strain>ATCC 15692 / DSM 22644 / CIP 104116 / JCM 14847 / LMG 12228 / 1C / PRS 101 / PAO1</strain>
    </source>
</reference>
<reference key="5">
    <citation type="journal article" date="2005" name="Antimicrob. Agents Chemother.">
        <title>Pseudomonas aeruginosa AmpR is a global transcriptional factor that regulates expression of AmpC and PoxB beta-lactamases, proteases, quorum sensing, and other virulence factors.</title>
        <authorList>
            <person name="Kong K.F."/>
            <person name="Jayawardena S.R."/>
            <person name="Indulkar S.D."/>
            <person name="Del Puerto A."/>
            <person name="Koh C.L."/>
            <person name="Hoeiby N."/>
            <person name="Mathee K."/>
        </authorList>
    </citation>
    <scope>FUNCTION</scope>
    <scope>CATALYTIC ACTIVITY</scope>
    <scope>INDUCTION BY BETA-LACTAM</scope>
</reference>
<reference key="6">
    <citation type="journal article" date="2014" name="J. Bacteriol.">
        <title>Structural and functional characterization of Pseudomonas aeruginosa global regulator AmpR.</title>
        <authorList>
            <person name="Caille O."/>
            <person name="Zincke D."/>
            <person name="Merighi M."/>
            <person name="Balasubramanian D."/>
            <person name="Kumari H."/>
            <person name="Kong K.F."/>
            <person name="Silva-Herzog E."/>
            <person name="Narasimhan G."/>
            <person name="Schneper L."/>
            <person name="Lory S."/>
            <person name="Mathee K."/>
        </authorList>
    </citation>
    <scope>INDUCTION BY BETA-LACTAMS; RPON</scope>
</reference>
<reference key="7">
    <citation type="journal article" date="2020" name="Antimicrob. Agents Chemother.">
        <title>A Standard Numbering Scheme for Class C beta-Lactamases.</title>
        <authorList>
            <person name="Mack A.R."/>
            <person name="Barnes M.D."/>
            <person name="Taracila M.A."/>
            <person name="Hujer A.M."/>
            <person name="Hujer K.M."/>
            <person name="Cabot G."/>
            <person name="Feldgarden M."/>
            <person name="Haft D.H."/>
            <person name="Klimke W."/>
            <person name="van den Akker F."/>
            <person name="Vila A.J."/>
            <person name="Smania A."/>
            <person name="Haider S."/>
            <person name="Papp-Wallace K.M."/>
            <person name="Bradford P.A."/>
            <person name="Rossolini G.M."/>
            <person name="Docquier J.D."/>
            <person name="Frere J.M."/>
            <person name="Galleni M."/>
            <person name="Hanson N.D."/>
            <person name="Oliver A."/>
            <person name="Plesiat P."/>
            <person name="Poirel L."/>
            <person name="Nordmann P."/>
            <person name="Palzkill T.G."/>
            <person name="Jacoby G.A."/>
            <person name="Bush K."/>
            <person name="Bonomo R.A."/>
        </authorList>
    </citation>
    <scope>AMINO ACID NUMBERING SCHEME</scope>
</reference>